<sequence>MLIILTGLPSVGKSTFSKAFSKKMAEKNIDNIILGTDLIRESFPVWKESYEEFIRDSNNYLIKEALENKFSVIVDDTNYYNSKRRDLMNIAKECDTNYVTIYLKAPLNLLLKRNIERGQKIPNEVIKNMYEKFDTPGTKYAWDLPDITVDTTEKIDYNEILNEILEINENKNLKIEEDKIPKSEPVESDLVKIDSLTRNIVGNLIKTGKIDKKDIKLLSEIRKSFLKDCKKIESEKLDFEKIEKDFLDYLNKNLK</sequence>
<protein>
    <recommendedName>
        <fullName>L-seryl-tRNA(Sec) kinase</fullName>
        <ecNumber>2.7.1.164</ecNumber>
    </recommendedName>
    <alternativeName>
        <fullName>O-phosphoseryl-tRNA(Sec) kinase</fullName>
        <shortName>PSTK</shortName>
    </alternativeName>
</protein>
<name>PSTK_METMP</name>
<reference key="1">
    <citation type="journal article" date="2004" name="J. Bacteriol.">
        <title>Complete genome sequence of the genetically tractable hydrogenotrophic methanogen Methanococcus maripaludis.</title>
        <authorList>
            <person name="Hendrickson E.L."/>
            <person name="Kaul R."/>
            <person name="Zhou Y."/>
            <person name="Bovee D."/>
            <person name="Chapman P."/>
            <person name="Chung J."/>
            <person name="Conway de Macario E."/>
            <person name="Dodsworth J.A."/>
            <person name="Gillett W."/>
            <person name="Graham D.E."/>
            <person name="Hackett M."/>
            <person name="Haydock A.K."/>
            <person name="Kang A."/>
            <person name="Land M.L."/>
            <person name="Levy R."/>
            <person name="Lie T.J."/>
            <person name="Major T.A."/>
            <person name="Moore B.C."/>
            <person name="Porat I."/>
            <person name="Palmeiri A."/>
            <person name="Rouse G."/>
            <person name="Saenphimmachak C."/>
            <person name="Soell D."/>
            <person name="Van Dien S."/>
            <person name="Wang T."/>
            <person name="Whitman W.B."/>
            <person name="Xia Q."/>
            <person name="Zhang Y."/>
            <person name="Larimer F.W."/>
            <person name="Olson M.V."/>
            <person name="Leigh J.A."/>
        </authorList>
    </citation>
    <scope>NUCLEOTIDE SEQUENCE [LARGE SCALE GENOMIC DNA]</scope>
    <source>
        <strain>DSM 14266 / JCM 13030 / NBRC 101832 / S2 / LL</strain>
    </source>
</reference>
<keyword id="KW-0067">ATP-binding</keyword>
<keyword id="KW-0418">Kinase</keyword>
<keyword id="KW-0547">Nucleotide-binding</keyword>
<keyword id="KW-1185">Reference proteome</keyword>
<keyword id="KW-0808">Transferase</keyword>
<evidence type="ECO:0000250" key="1"/>
<evidence type="ECO:0000255" key="2"/>
<evidence type="ECO:0000305" key="3"/>
<feature type="chain" id="PRO_0000285592" description="L-seryl-tRNA(Sec) kinase">
    <location>
        <begin position="1"/>
        <end position="255"/>
    </location>
</feature>
<feature type="binding site" evidence="2">
    <location>
        <begin position="7"/>
        <end position="14"/>
    </location>
    <ligand>
        <name>ATP</name>
        <dbReference type="ChEBI" id="CHEBI:30616"/>
    </ligand>
</feature>
<proteinExistence type="inferred from homology"/>
<comment type="function">
    <text evidence="1">Specifically phosphorylates seryl-tRNA(Sec) to O-phosphoseryl-tRNA(Sec), an activated intermediate for selenocysteine biosynthesis.</text>
</comment>
<comment type="catalytic activity">
    <reaction>
        <text>L-seryl-tRNA(Sec) + ATP = O-phospho-L-seryl-tRNA(Sec) + ADP</text>
        <dbReference type="Rhea" id="RHEA:25037"/>
        <dbReference type="Rhea" id="RHEA-COMP:9742"/>
        <dbReference type="Rhea" id="RHEA-COMP:9947"/>
        <dbReference type="ChEBI" id="CHEBI:30616"/>
        <dbReference type="ChEBI" id="CHEBI:78533"/>
        <dbReference type="ChEBI" id="CHEBI:78551"/>
        <dbReference type="ChEBI" id="CHEBI:456216"/>
        <dbReference type="EC" id="2.7.1.164"/>
    </reaction>
</comment>
<comment type="pathway">
    <text>Aminoacyl-tRNA biosynthesis; selenocysteinyl-tRNA(Sec) biosynthesis; selenocysteinyl-tRNA(Sec) from L-seryl-tRNA(Sec) (archaeal/eukaryal route): step 1/2.</text>
</comment>
<comment type="similarity">
    <text evidence="3">Belongs to the L-seryl-tRNA(Sec) kinase family.</text>
</comment>
<gene>
    <name type="primary">pstK</name>
    <name type="ordered locus">MMP1490</name>
</gene>
<dbReference type="EC" id="2.7.1.164"/>
<dbReference type="EMBL" id="BX950229">
    <property type="protein sequence ID" value="CAF31046.1"/>
    <property type="molecule type" value="Genomic_DNA"/>
</dbReference>
<dbReference type="SMR" id="Q6LX62"/>
<dbReference type="STRING" id="267377.MMP1490"/>
<dbReference type="EnsemblBacteria" id="CAF31046">
    <property type="protein sequence ID" value="CAF31046"/>
    <property type="gene ID" value="MMP1490"/>
</dbReference>
<dbReference type="KEGG" id="mmp:MMP1490"/>
<dbReference type="PATRIC" id="fig|267377.15.peg.1527"/>
<dbReference type="eggNOG" id="arCOG01041">
    <property type="taxonomic scope" value="Archaea"/>
</dbReference>
<dbReference type="HOGENOM" id="CLU_1100964_0_0_2"/>
<dbReference type="UniPathway" id="UPA00906">
    <property type="reaction ID" value="UER00897"/>
</dbReference>
<dbReference type="Proteomes" id="UP000000590">
    <property type="component" value="Chromosome"/>
</dbReference>
<dbReference type="GO" id="GO:0005524">
    <property type="term" value="F:ATP binding"/>
    <property type="evidence" value="ECO:0007669"/>
    <property type="project" value="UniProtKB-KW"/>
</dbReference>
<dbReference type="GO" id="GO:0043915">
    <property type="term" value="F:L-seryl-tRNA(Sec) kinase activity"/>
    <property type="evidence" value="ECO:0007669"/>
    <property type="project" value="UniProtKB-EC"/>
</dbReference>
<dbReference type="GO" id="GO:0001717">
    <property type="term" value="P:conversion of seryl-tRNAsec to selenocys-tRNAsec"/>
    <property type="evidence" value="ECO:0007669"/>
    <property type="project" value="InterPro"/>
</dbReference>
<dbReference type="Gene3D" id="1.10.12.40">
    <property type="match status" value="1"/>
</dbReference>
<dbReference type="Gene3D" id="3.40.50.300">
    <property type="entry name" value="P-loop containing nucleotide triphosphate hydrolases"/>
    <property type="match status" value="1"/>
</dbReference>
<dbReference type="InterPro" id="IPR013641">
    <property type="entry name" value="KTI12/PSTK"/>
</dbReference>
<dbReference type="InterPro" id="IPR020024">
    <property type="entry name" value="L-seryl-tRNA_Sec_kinase_arc"/>
</dbReference>
<dbReference type="InterPro" id="IPR027417">
    <property type="entry name" value="P-loop_NTPase"/>
</dbReference>
<dbReference type="NCBIfam" id="TIGR03574">
    <property type="entry name" value="selen_PSTK"/>
    <property type="match status" value="1"/>
</dbReference>
<dbReference type="PANTHER" id="PTHR12435">
    <property type="match status" value="1"/>
</dbReference>
<dbReference type="Pfam" id="PF08433">
    <property type="entry name" value="KTI12"/>
    <property type="match status" value="1"/>
</dbReference>
<dbReference type="SUPFAM" id="SSF52540">
    <property type="entry name" value="P-loop containing nucleoside triphosphate hydrolases"/>
    <property type="match status" value="1"/>
</dbReference>
<accession>Q6LX62</accession>
<organism>
    <name type="scientific">Methanococcus maripaludis (strain DSM 14266 / JCM 13030 / NBRC 101832 / S2 / LL)</name>
    <dbReference type="NCBI Taxonomy" id="267377"/>
    <lineage>
        <taxon>Archaea</taxon>
        <taxon>Methanobacteriati</taxon>
        <taxon>Methanobacteriota</taxon>
        <taxon>Methanomada group</taxon>
        <taxon>Methanococci</taxon>
        <taxon>Methanococcales</taxon>
        <taxon>Methanococcaceae</taxon>
        <taxon>Methanococcus</taxon>
    </lineage>
</organism>